<gene>
    <name evidence="2" type="primary">mutM</name>
    <name evidence="2" type="synonym">fpg</name>
    <name type="ordered locus">PSEEN0287</name>
</gene>
<feature type="initiator methionine" description="Removed" evidence="1">
    <location>
        <position position="1"/>
    </location>
</feature>
<feature type="chain" id="PRO_1000008743" description="Formamidopyrimidine-DNA glycosylase">
    <location>
        <begin position="2"/>
        <end position="270"/>
    </location>
</feature>
<feature type="zinc finger region" description="FPG-type" evidence="2">
    <location>
        <begin position="236"/>
        <end position="270"/>
    </location>
</feature>
<feature type="active site" description="Schiff-base intermediate with DNA" evidence="2">
    <location>
        <position position="2"/>
    </location>
</feature>
<feature type="active site" description="Proton donor" evidence="2">
    <location>
        <position position="3"/>
    </location>
</feature>
<feature type="active site" description="Proton donor; for beta-elimination activity" evidence="2">
    <location>
        <position position="58"/>
    </location>
</feature>
<feature type="active site" description="Proton donor; for delta-elimination activity" evidence="2">
    <location>
        <position position="260"/>
    </location>
</feature>
<feature type="binding site" evidence="2">
    <location>
        <position position="91"/>
    </location>
    <ligand>
        <name>DNA</name>
        <dbReference type="ChEBI" id="CHEBI:16991"/>
    </ligand>
</feature>
<feature type="binding site" evidence="2">
    <location>
        <position position="110"/>
    </location>
    <ligand>
        <name>DNA</name>
        <dbReference type="ChEBI" id="CHEBI:16991"/>
    </ligand>
</feature>
<feature type="binding site" evidence="2">
    <location>
        <position position="151"/>
    </location>
    <ligand>
        <name>DNA</name>
        <dbReference type="ChEBI" id="CHEBI:16991"/>
    </ligand>
</feature>
<keyword id="KW-0227">DNA damage</keyword>
<keyword id="KW-0234">DNA repair</keyword>
<keyword id="KW-0238">DNA-binding</keyword>
<keyword id="KW-0326">Glycosidase</keyword>
<keyword id="KW-0378">Hydrolase</keyword>
<keyword id="KW-0456">Lyase</keyword>
<keyword id="KW-0479">Metal-binding</keyword>
<keyword id="KW-0511">Multifunctional enzyme</keyword>
<keyword id="KW-0862">Zinc</keyword>
<keyword id="KW-0863">Zinc-finger</keyword>
<comment type="function">
    <text evidence="2">Involved in base excision repair of DNA damaged by oxidation or by mutagenic agents. Acts as a DNA glycosylase that recognizes and removes damaged bases. Has a preference for oxidized purines, such as 7,8-dihydro-8-oxoguanine (8-oxoG). Has AP (apurinic/apyrimidinic) lyase activity and introduces nicks in the DNA strand. Cleaves the DNA backbone by beta-delta elimination to generate a single-strand break at the site of the removed base with both 3'- and 5'-phosphates.</text>
</comment>
<comment type="catalytic activity">
    <reaction evidence="2">
        <text>Hydrolysis of DNA containing ring-opened 7-methylguanine residues, releasing 2,6-diamino-4-hydroxy-5-(N-methyl)formamidopyrimidine.</text>
        <dbReference type="EC" id="3.2.2.23"/>
    </reaction>
</comment>
<comment type="catalytic activity">
    <reaction evidence="2">
        <text>2'-deoxyribonucleotide-(2'-deoxyribose 5'-phosphate)-2'-deoxyribonucleotide-DNA = a 3'-end 2'-deoxyribonucleotide-(2,3-dehydro-2,3-deoxyribose 5'-phosphate)-DNA + a 5'-end 5'-phospho-2'-deoxyribonucleoside-DNA + H(+)</text>
        <dbReference type="Rhea" id="RHEA:66592"/>
        <dbReference type="Rhea" id="RHEA-COMP:13180"/>
        <dbReference type="Rhea" id="RHEA-COMP:16897"/>
        <dbReference type="Rhea" id="RHEA-COMP:17067"/>
        <dbReference type="ChEBI" id="CHEBI:15378"/>
        <dbReference type="ChEBI" id="CHEBI:136412"/>
        <dbReference type="ChEBI" id="CHEBI:157695"/>
        <dbReference type="ChEBI" id="CHEBI:167181"/>
        <dbReference type="EC" id="4.2.99.18"/>
    </reaction>
</comment>
<comment type="cofactor">
    <cofactor evidence="2">
        <name>Zn(2+)</name>
        <dbReference type="ChEBI" id="CHEBI:29105"/>
    </cofactor>
    <text evidence="2">Binds 1 zinc ion per subunit.</text>
</comment>
<comment type="subunit">
    <text evidence="2">Monomer.</text>
</comment>
<comment type="similarity">
    <text evidence="2">Belongs to the FPG family.</text>
</comment>
<protein>
    <recommendedName>
        <fullName evidence="2">Formamidopyrimidine-DNA glycosylase</fullName>
        <shortName evidence="2">Fapy-DNA glycosylase</shortName>
        <ecNumber evidence="2">3.2.2.23</ecNumber>
    </recommendedName>
    <alternativeName>
        <fullName evidence="2">DNA-(apurinic or apyrimidinic site) lyase MutM</fullName>
        <shortName evidence="2">AP lyase MutM</shortName>
        <ecNumber evidence="2">4.2.99.18</ecNumber>
    </alternativeName>
</protein>
<name>FPG_PSEE4</name>
<reference key="1">
    <citation type="journal article" date="2006" name="Nat. Biotechnol.">
        <title>Complete genome sequence of the entomopathogenic and metabolically versatile soil bacterium Pseudomonas entomophila.</title>
        <authorList>
            <person name="Vodovar N."/>
            <person name="Vallenet D."/>
            <person name="Cruveiller S."/>
            <person name="Rouy Z."/>
            <person name="Barbe V."/>
            <person name="Acosta C."/>
            <person name="Cattolico L."/>
            <person name="Jubin C."/>
            <person name="Lajus A."/>
            <person name="Segurens B."/>
            <person name="Vacherie B."/>
            <person name="Wincker P."/>
            <person name="Weissenbach J."/>
            <person name="Lemaitre B."/>
            <person name="Medigue C."/>
            <person name="Boccard F."/>
        </authorList>
    </citation>
    <scope>NUCLEOTIDE SEQUENCE [LARGE SCALE GENOMIC DNA]</scope>
    <source>
        <strain>L48</strain>
    </source>
</reference>
<organism>
    <name type="scientific">Pseudomonas entomophila (strain L48)</name>
    <dbReference type="NCBI Taxonomy" id="384676"/>
    <lineage>
        <taxon>Bacteria</taxon>
        <taxon>Pseudomonadati</taxon>
        <taxon>Pseudomonadota</taxon>
        <taxon>Gammaproteobacteria</taxon>
        <taxon>Pseudomonadales</taxon>
        <taxon>Pseudomonadaceae</taxon>
        <taxon>Pseudomonas</taxon>
    </lineage>
</organism>
<proteinExistence type="inferred from homology"/>
<dbReference type="EC" id="3.2.2.23" evidence="2"/>
<dbReference type="EC" id="4.2.99.18" evidence="2"/>
<dbReference type="EMBL" id="CT573326">
    <property type="protein sequence ID" value="CAK13249.1"/>
    <property type="molecule type" value="Genomic_DNA"/>
</dbReference>
<dbReference type="RefSeq" id="WP_011531709.1">
    <property type="nucleotide sequence ID" value="NC_008027.1"/>
</dbReference>
<dbReference type="SMR" id="Q1IGF3"/>
<dbReference type="STRING" id="384676.PSEEN0287"/>
<dbReference type="GeneID" id="32803630"/>
<dbReference type="KEGG" id="pen:PSEEN0287"/>
<dbReference type="eggNOG" id="COG0266">
    <property type="taxonomic scope" value="Bacteria"/>
</dbReference>
<dbReference type="HOGENOM" id="CLU_038423_1_1_6"/>
<dbReference type="OrthoDB" id="9800855at2"/>
<dbReference type="Proteomes" id="UP000000658">
    <property type="component" value="Chromosome"/>
</dbReference>
<dbReference type="GO" id="GO:0034039">
    <property type="term" value="F:8-oxo-7,8-dihydroguanine DNA N-glycosylase activity"/>
    <property type="evidence" value="ECO:0007669"/>
    <property type="project" value="TreeGrafter"/>
</dbReference>
<dbReference type="GO" id="GO:0140078">
    <property type="term" value="F:class I DNA-(apurinic or apyrimidinic site) endonuclease activity"/>
    <property type="evidence" value="ECO:0007669"/>
    <property type="project" value="UniProtKB-EC"/>
</dbReference>
<dbReference type="GO" id="GO:0003684">
    <property type="term" value="F:damaged DNA binding"/>
    <property type="evidence" value="ECO:0007669"/>
    <property type="project" value="InterPro"/>
</dbReference>
<dbReference type="GO" id="GO:0008270">
    <property type="term" value="F:zinc ion binding"/>
    <property type="evidence" value="ECO:0007669"/>
    <property type="project" value="UniProtKB-UniRule"/>
</dbReference>
<dbReference type="GO" id="GO:0006284">
    <property type="term" value="P:base-excision repair"/>
    <property type="evidence" value="ECO:0007669"/>
    <property type="project" value="InterPro"/>
</dbReference>
<dbReference type="CDD" id="cd08966">
    <property type="entry name" value="EcFpg-like_N"/>
    <property type="match status" value="1"/>
</dbReference>
<dbReference type="FunFam" id="1.10.8.50:FF:000003">
    <property type="entry name" value="Formamidopyrimidine-DNA glycosylase"/>
    <property type="match status" value="1"/>
</dbReference>
<dbReference type="FunFam" id="3.20.190.10:FF:000001">
    <property type="entry name" value="Formamidopyrimidine-DNA glycosylase"/>
    <property type="match status" value="1"/>
</dbReference>
<dbReference type="Gene3D" id="1.10.8.50">
    <property type="match status" value="1"/>
</dbReference>
<dbReference type="Gene3D" id="3.20.190.10">
    <property type="entry name" value="MutM-like, N-terminal"/>
    <property type="match status" value="1"/>
</dbReference>
<dbReference type="HAMAP" id="MF_00103">
    <property type="entry name" value="Fapy_DNA_glycosyl"/>
    <property type="match status" value="1"/>
</dbReference>
<dbReference type="InterPro" id="IPR015886">
    <property type="entry name" value="DNA_glyclase/AP_lyase_DNA-bd"/>
</dbReference>
<dbReference type="InterPro" id="IPR015887">
    <property type="entry name" value="DNA_glyclase_Znf_dom_DNA_BS"/>
</dbReference>
<dbReference type="InterPro" id="IPR020629">
    <property type="entry name" value="Formamido-pyr_DNA_Glyclase"/>
</dbReference>
<dbReference type="InterPro" id="IPR012319">
    <property type="entry name" value="FPG_cat"/>
</dbReference>
<dbReference type="InterPro" id="IPR035937">
    <property type="entry name" value="MutM-like_N-ter"/>
</dbReference>
<dbReference type="InterPro" id="IPR010979">
    <property type="entry name" value="Ribosomal_uS13-like_H2TH"/>
</dbReference>
<dbReference type="InterPro" id="IPR000214">
    <property type="entry name" value="Znf_DNA_glyclase/AP_lyase"/>
</dbReference>
<dbReference type="InterPro" id="IPR010663">
    <property type="entry name" value="Znf_FPG/IleRS"/>
</dbReference>
<dbReference type="NCBIfam" id="TIGR00577">
    <property type="entry name" value="fpg"/>
    <property type="match status" value="1"/>
</dbReference>
<dbReference type="NCBIfam" id="NF002211">
    <property type="entry name" value="PRK01103.1"/>
    <property type="match status" value="1"/>
</dbReference>
<dbReference type="PANTHER" id="PTHR22993">
    <property type="entry name" value="FORMAMIDOPYRIMIDINE-DNA GLYCOSYLASE"/>
    <property type="match status" value="1"/>
</dbReference>
<dbReference type="PANTHER" id="PTHR22993:SF9">
    <property type="entry name" value="FORMAMIDOPYRIMIDINE-DNA GLYCOSYLASE"/>
    <property type="match status" value="1"/>
</dbReference>
<dbReference type="Pfam" id="PF01149">
    <property type="entry name" value="Fapy_DNA_glyco"/>
    <property type="match status" value="1"/>
</dbReference>
<dbReference type="Pfam" id="PF06831">
    <property type="entry name" value="H2TH"/>
    <property type="match status" value="1"/>
</dbReference>
<dbReference type="Pfam" id="PF06827">
    <property type="entry name" value="zf-FPG_IleRS"/>
    <property type="match status" value="1"/>
</dbReference>
<dbReference type="SMART" id="SM00898">
    <property type="entry name" value="Fapy_DNA_glyco"/>
    <property type="match status" value="1"/>
</dbReference>
<dbReference type="SMART" id="SM01232">
    <property type="entry name" value="H2TH"/>
    <property type="match status" value="1"/>
</dbReference>
<dbReference type="SUPFAM" id="SSF57716">
    <property type="entry name" value="Glucocorticoid receptor-like (DNA-binding domain)"/>
    <property type="match status" value="1"/>
</dbReference>
<dbReference type="SUPFAM" id="SSF81624">
    <property type="entry name" value="N-terminal domain of MutM-like DNA repair proteins"/>
    <property type="match status" value="1"/>
</dbReference>
<dbReference type="SUPFAM" id="SSF46946">
    <property type="entry name" value="S13-like H2TH domain"/>
    <property type="match status" value="1"/>
</dbReference>
<dbReference type="PROSITE" id="PS51068">
    <property type="entry name" value="FPG_CAT"/>
    <property type="match status" value="1"/>
</dbReference>
<dbReference type="PROSITE" id="PS01242">
    <property type="entry name" value="ZF_FPG_1"/>
    <property type="match status" value="1"/>
</dbReference>
<dbReference type="PROSITE" id="PS51066">
    <property type="entry name" value="ZF_FPG_2"/>
    <property type="match status" value="1"/>
</dbReference>
<evidence type="ECO:0000250" key="1"/>
<evidence type="ECO:0000255" key="2">
    <source>
        <dbReference type="HAMAP-Rule" id="MF_00103"/>
    </source>
</evidence>
<sequence>MPELPEVETTRRGIAPHLVGQRVSRVVVRDRRLRWPIPEDLDVRLSGQCIVSVERRAKYLLINAEVGTLISHLGMSGNLRLVELGLPAAKHEHVDIELESGLMLRYTDPRRFGAMLWSLDPLNHELLIRLGPEPLTDLFDGERLFQLSRGRSMAVKPFIMDNAVVVGVGNIYATEALFAAGIDPRREAGGISRARYLKLAIEIKRVLAAAIEQGGTTLRDFIGGDGQPGYFQQELFVYGRGGQPCKVCGTELREVKLGQRASVFCPKCQR</sequence>
<accession>Q1IGF3</accession>